<sequence length="705" mass="80079">MSRDLQNHLLFETATEVANRVGGIYSVLKSKAPITVAQYKDHYHLIGPLNKATYQNEVDILDWKKPEAFSDEMRPVQHALQTMESRGVHFVYGRWLIEGAPKVILFDLDSVRGYSNEWKGDLWSLVGIPSPENDFETNDAILLGYTVAWFLGEVAHLDSQHAIVAHFHEWLAGVALPLCRKRRIDVVTIFTTHATLLGRYLCASGSFDFYNCLESVDVDHEAGRFGIYHRYCIERAAAHSADVFTTVSQITAFEAEHLLKRKPDGILPNGLNVIKFQAFHEFQNLHALKKEKINDFVRGHFHGCFDFDLDNTLYFFIAGRYEYKNKGADMFIEALARLNYRLKVSGSKKTVVAFIVMPAKNNSFTVEALKGQAEVRALENTVHEVTTSIGKRIFDHAIRYPHNGLTTELPTDLGELLKSSDKVMLKRRILALRRPEGQLPPIVTHNMVDDANDLILNKIRQVQLFNSPSDRVKMIFHPEFLNANNPILGLDYDEFVRGCHLGVFPSYYEPWGYTPAECTVMGVPSITTNVSGFGAYMEDLIETNQAKDYGIYIVDRRFKAPDESVEQLVDYMEEFVKKTRRQRINQRNRTERLSDLLDWKRMGLEYVKARQLALRRGYPDQFRELVGEELNDSNMDALAGGKKLKVARPLSVPGSPRDLRSNSTVYMTPGDLGTLQEVNNADDYFSLGVNPAADDDDDGPYADDS</sequence>
<organism>
    <name type="scientific">Saccharomyces cerevisiae (strain ATCC 204508 / S288c)</name>
    <name type="common">Baker's yeast</name>
    <dbReference type="NCBI Taxonomy" id="559292"/>
    <lineage>
        <taxon>Eukaryota</taxon>
        <taxon>Fungi</taxon>
        <taxon>Dikarya</taxon>
        <taxon>Ascomycota</taxon>
        <taxon>Saccharomycotina</taxon>
        <taxon>Saccharomycetes</taxon>
        <taxon>Saccharomycetales</taxon>
        <taxon>Saccharomycetaceae</taxon>
        <taxon>Saccharomyces</taxon>
    </lineage>
</organism>
<name>GYS2_YEAST</name>
<keyword id="KW-0002">3D-structure</keyword>
<keyword id="KW-0021">Allosteric enzyme</keyword>
<keyword id="KW-0963">Cytoplasm</keyword>
<keyword id="KW-0903">Direct protein sequencing</keyword>
<keyword id="KW-0320">Glycogen biosynthesis</keyword>
<keyword id="KW-0328">Glycosyltransferase</keyword>
<keyword id="KW-0597">Phosphoprotein</keyword>
<keyword id="KW-1185">Reference proteome</keyword>
<keyword id="KW-0808">Transferase</keyword>
<evidence type="ECO:0000250" key="1">
    <source>
        <dbReference type="UniProtKB" id="P13807"/>
    </source>
</evidence>
<evidence type="ECO:0000250" key="2">
    <source>
        <dbReference type="UniProtKB" id="P23337"/>
    </source>
</evidence>
<evidence type="ECO:0000255" key="3"/>
<evidence type="ECO:0000256" key="4">
    <source>
        <dbReference type="SAM" id="MobiDB-lite"/>
    </source>
</evidence>
<evidence type="ECO:0000269" key="5">
    <source>
    </source>
</evidence>
<evidence type="ECO:0000269" key="6">
    <source>
    </source>
</evidence>
<evidence type="ECO:0000269" key="7">
    <source>
    </source>
</evidence>
<evidence type="ECO:0000269" key="8">
    <source>
    </source>
</evidence>
<evidence type="ECO:0000269" key="9">
    <source>
    </source>
</evidence>
<evidence type="ECO:0000305" key="10"/>
<evidence type="ECO:0007744" key="11">
    <source>
    </source>
</evidence>
<evidence type="ECO:0007744" key="12">
    <source>
    </source>
</evidence>
<evidence type="ECO:0007744" key="13">
    <source>
    </source>
</evidence>
<evidence type="ECO:0007744" key="14">
    <source>
    </source>
</evidence>
<evidence type="ECO:0007829" key="15">
    <source>
        <dbReference type="PDB" id="3NB0"/>
    </source>
</evidence>
<evidence type="ECO:0007829" key="16">
    <source>
        <dbReference type="PDB" id="3NCH"/>
    </source>
</evidence>
<evidence type="ECO:0007829" key="17">
    <source>
        <dbReference type="PDB" id="4KQ2"/>
    </source>
</evidence>
<evidence type="ECO:0007829" key="18">
    <source>
        <dbReference type="PDB" id="4KQM"/>
    </source>
</evidence>
<evidence type="ECO:0007829" key="19">
    <source>
        <dbReference type="PDB" id="5SUL"/>
    </source>
</evidence>
<protein>
    <recommendedName>
        <fullName>Glycogen [starch] synthase isoform 2</fullName>
        <ecNumber evidence="7">2.4.1.11</ecNumber>
    </recommendedName>
</protein>
<proteinExistence type="evidence at protein level"/>
<feature type="chain" id="PRO_0000194774" description="Glycogen [starch] synthase isoform 2">
    <location>
        <begin position="1"/>
        <end position="705"/>
    </location>
</feature>
<feature type="region of interest" description="Disordered" evidence="4">
    <location>
        <begin position="686"/>
        <end position="705"/>
    </location>
</feature>
<feature type="compositionally biased region" description="Acidic residues" evidence="4">
    <location>
        <begin position="693"/>
        <end position="705"/>
    </location>
</feature>
<feature type="binding site" evidence="1">
    <location>
        <position position="20"/>
    </location>
    <ligand>
        <name>UDP</name>
        <dbReference type="ChEBI" id="CHEBI:58223"/>
    </ligand>
</feature>
<feature type="binding site" evidence="1">
    <location>
        <position position="193"/>
    </location>
    <ligand>
        <name>UDP-alpha-D-glucose</name>
        <dbReference type="ChEBI" id="CHEBI:58885"/>
    </ligand>
</feature>
<feature type="binding site" evidence="1">
    <location>
        <position position="199"/>
    </location>
    <ligand>
        <name>UDP-alpha-D-glucose</name>
        <dbReference type="ChEBI" id="CHEBI:58885"/>
    </ligand>
</feature>
<feature type="binding site" description="in other chain" evidence="1">
    <location>
        <position position="280"/>
    </location>
    <ligand>
        <name>alpha-D-glucose 6-phosphate</name>
        <dbReference type="ChEBI" id="CHEBI:58225"/>
        <note>allosteric activator; ligand shared between two neighboring subunits</note>
    </ligand>
</feature>
<feature type="binding site" description="in other chain" evidence="1">
    <location>
        <position position="281"/>
    </location>
    <ligand>
        <name>alpha-D-glucose 6-phosphate</name>
        <dbReference type="ChEBI" id="CHEBI:58225"/>
        <note>allosteric activator; ligand shared between two neighboring subunits</note>
    </ligand>
</feature>
<feature type="binding site" evidence="1">
    <location>
        <position position="283"/>
    </location>
    <ligand>
        <name>alpha-D-glucose 6-phosphate</name>
        <dbReference type="ChEBI" id="CHEBI:58225"/>
        <note>allosteric activator; ligand shared between two neighboring subunits</note>
    </ligand>
</feature>
<feature type="binding site" evidence="1">
    <location>
        <position position="286"/>
    </location>
    <ligand>
        <name>alpha-D-glucose 6-phosphate</name>
        <dbReference type="ChEBI" id="CHEBI:58225"/>
        <note>allosteric activator; ligand shared between two neighboring subunits</note>
    </ligand>
</feature>
<feature type="binding site" evidence="1">
    <location>
        <position position="290"/>
    </location>
    <ligand>
        <name>alpha-D-glucose 6-phosphate</name>
        <dbReference type="ChEBI" id="CHEBI:58225"/>
        <note>allosteric activator; ligand shared between two neighboring subunits</note>
    </ligand>
</feature>
<feature type="binding site" evidence="1">
    <location>
        <position position="320"/>
    </location>
    <ligand>
        <name>UDP</name>
        <dbReference type="ChEBI" id="CHEBI:58223"/>
    </ligand>
</feature>
<feature type="binding site" evidence="1">
    <location>
        <position position="320"/>
    </location>
    <ligand>
        <name>UDP-alpha-D-glucose</name>
        <dbReference type="ChEBI" id="CHEBI:58885"/>
    </ligand>
</feature>
<feature type="binding site" evidence="1">
    <location>
        <position position="500"/>
    </location>
    <ligand>
        <name>alpha-D-glucose 6-phosphate</name>
        <dbReference type="ChEBI" id="CHEBI:58225"/>
        <note>allosteric activator; ligand shared between two neighboring subunits</note>
    </ligand>
</feature>
<feature type="binding site" evidence="1">
    <location>
        <position position="509"/>
    </location>
    <ligand>
        <name>UDP-alpha-D-glucose</name>
        <dbReference type="ChEBI" id="CHEBI:58885"/>
    </ligand>
</feature>
<feature type="binding site" evidence="1">
    <location>
        <position position="511"/>
    </location>
    <ligand>
        <name>UDP-alpha-D-glucose</name>
        <dbReference type="ChEBI" id="CHEBI:58885"/>
    </ligand>
</feature>
<feature type="binding site" evidence="1">
    <location>
        <position position="512"/>
    </location>
    <ligand>
        <name>UDP-alpha-D-glucose</name>
        <dbReference type="ChEBI" id="CHEBI:58885"/>
    </ligand>
</feature>
<feature type="binding site" evidence="1">
    <location>
        <position position="514"/>
    </location>
    <ligand>
        <name>UDP</name>
        <dbReference type="ChEBI" id="CHEBI:58223"/>
    </ligand>
</feature>
<feature type="binding site" evidence="1">
    <location>
        <position position="583"/>
    </location>
    <ligand>
        <name>alpha-D-glucose 6-phosphate</name>
        <dbReference type="ChEBI" id="CHEBI:58225"/>
        <note>allosteric activator; ligand shared between two neighboring subunits</note>
    </ligand>
</feature>
<feature type="binding site" evidence="1">
    <location>
        <position position="587"/>
    </location>
    <ligand>
        <name>alpha-D-glucose 6-phosphate</name>
        <dbReference type="ChEBI" id="CHEBI:58225"/>
        <note>allosteric activator; ligand shared between two neighboring subunits</note>
    </ligand>
</feature>
<feature type="modified residue" description="Phosphoserine" evidence="3">
    <location>
        <position position="159"/>
    </location>
</feature>
<feature type="modified residue" description="Phosphoserine" evidence="3">
    <location>
        <position position="363"/>
    </location>
</feature>
<feature type="modified residue" description="Phosphoserine" evidence="13">
    <location>
        <position position="467"/>
    </location>
</feature>
<feature type="modified residue" description="Phosphoserine" evidence="11 12 13 14">
    <location>
        <position position="651"/>
    </location>
</feature>
<feature type="modified residue" description="Phosphoserine; by PHO85" evidence="9 11 13">
    <location>
        <position position="655"/>
    </location>
</feature>
<feature type="modified residue" description="Phosphoserine; by PKA" evidence="3">
    <location>
        <position position="661"/>
    </location>
</feature>
<feature type="modified residue" description="Phosphoserine; by PKA" evidence="3">
    <location>
        <position position="663"/>
    </location>
</feature>
<feature type="modified residue" description="Phosphothreonine; by PHO85" evidence="9">
    <location>
        <position position="668"/>
    </location>
</feature>
<feature type="sequence conflict" description="In Ref. 4; AA sequence." evidence="10" ref="4">
    <original>S</original>
    <variation>P</variation>
    <location>
        <position position="248"/>
    </location>
</feature>
<feature type="sequence conflict" description="In Ref. 1; AAA88716." evidence="10" ref="1">
    <original>A</original>
    <variation>S</variation>
    <location>
        <position position="535"/>
    </location>
</feature>
<feature type="sequence conflict" description="In Ref. 4; AA sequence." evidence="10" ref="4">
    <original>F</original>
    <variation>FF</variation>
    <location>
        <position position="622"/>
    </location>
</feature>
<feature type="strand" evidence="15">
    <location>
        <begin position="4"/>
        <end position="14"/>
    </location>
</feature>
<feature type="turn" evidence="15">
    <location>
        <begin position="15"/>
        <end position="18"/>
    </location>
</feature>
<feature type="helix" evidence="15">
    <location>
        <begin position="23"/>
        <end position="39"/>
    </location>
</feature>
<feature type="helix" evidence="15">
    <location>
        <begin position="40"/>
        <end position="42"/>
    </location>
</feature>
<feature type="strand" evidence="15">
    <location>
        <begin position="43"/>
        <end position="48"/>
    </location>
</feature>
<feature type="turn" evidence="15">
    <location>
        <begin position="51"/>
        <end position="53"/>
    </location>
</feature>
<feature type="helix" evidence="15">
    <location>
        <begin position="54"/>
        <end position="57"/>
    </location>
</feature>
<feature type="strand" evidence="15">
    <location>
        <begin position="58"/>
        <end position="60"/>
    </location>
</feature>
<feature type="strand" evidence="15">
    <location>
        <begin position="63"/>
        <end position="65"/>
    </location>
</feature>
<feature type="helix" evidence="15">
    <location>
        <begin position="66"/>
        <end position="68"/>
    </location>
</feature>
<feature type="helix" evidence="18">
    <location>
        <begin position="71"/>
        <end position="73"/>
    </location>
</feature>
<feature type="helix" evidence="15">
    <location>
        <begin position="74"/>
        <end position="84"/>
    </location>
</feature>
<feature type="turn" evidence="15">
    <location>
        <begin position="85"/>
        <end position="87"/>
    </location>
</feature>
<feature type="strand" evidence="15">
    <location>
        <begin position="90"/>
        <end position="97"/>
    </location>
</feature>
<feature type="strand" evidence="15">
    <location>
        <begin position="102"/>
        <end position="106"/>
    </location>
</feature>
<feature type="helix" evidence="15">
    <location>
        <begin position="109"/>
        <end position="114"/>
    </location>
</feature>
<feature type="helix" evidence="15">
    <location>
        <begin position="115"/>
        <end position="126"/>
    </location>
</feature>
<feature type="helix" evidence="15">
    <location>
        <begin position="135"/>
        <end position="157"/>
    </location>
</feature>
<feature type="strand" evidence="15">
    <location>
        <begin position="160"/>
        <end position="169"/>
    </location>
</feature>
<feature type="helix" evidence="15">
    <location>
        <begin position="170"/>
        <end position="172"/>
    </location>
</feature>
<feature type="helix" evidence="15">
    <location>
        <begin position="175"/>
        <end position="181"/>
    </location>
</feature>
<feature type="strand" evidence="15">
    <location>
        <begin position="187"/>
        <end position="194"/>
    </location>
</feature>
<feature type="helix" evidence="15">
    <location>
        <begin position="196"/>
        <end position="201"/>
    </location>
</feature>
<feature type="strand" evidence="15">
    <location>
        <begin position="203"/>
        <end position="205"/>
    </location>
</feature>
<feature type="helix" evidence="15">
    <location>
        <begin position="209"/>
        <end position="212"/>
    </location>
</feature>
<feature type="helix" evidence="15">
    <location>
        <begin position="213"/>
        <end position="215"/>
    </location>
</feature>
<feature type="helix" evidence="15">
    <location>
        <begin position="218"/>
        <end position="224"/>
    </location>
</feature>
<feature type="helix" evidence="15">
    <location>
        <begin position="228"/>
        <end position="240"/>
    </location>
</feature>
<feature type="strand" evidence="15">
    <location>
        <begin position="241"/>
        <end position="248"/>
    </location>
</feature>
<feature type="helix" evidence="15">
    <location>
        <begin position="249"/>
        <end position="258"/>
    </location>
</feature>
<feature type="strand" evidence="15">
    <location>
        <begin position="259"/>
        <end position="261"/>
    </location>
</feature>
<feature type="strand" evidence="15">
    <location>
        <begin position="264"/>
        <end position="266"/>
    </location>
</feature>
<feature type="helix" evidence="16">
    <location>
        <begin position="273"/>
        <end position="276"/>
    </location>
</feature>
<feature type="helix" evidence="15">
    <location>
        <begin position="281"/>
        <end position="300"/>
    </location>
</feature>
<feature type="turn" evidence="15">
    <location>
        <begin position="301"/>
        <end position="303"/>
    </location>
</feature>
<feature type="helix" evidence="15">
    <location>
        <begin position="309"/>
        <end position="311"/>
    </location>
</feature>
<feature type="strand" evidence="15">
    <location>
        <begin position="312"/>
        <end position="320"/>
    </location>
</feature>
<feature type="turn" evidence="15">
    <location>
        <begin position="323"/>
        <end position="327"/>
    </location>
</feature>
<feature type="helix" evidence="15">
    <location>
        <begin position="328"/>
        <end position="344"/>
    </location>
</feature>
<feature type="strand" evidence="15">
    <location>
        <begin position="350"/>
        <end position="356"/>
    </location>
</feature>
<feature type="strand" evidence="15">
    <location>
        <begin position="361"/>
        <end position="364"/>
    </location>
</feature>
<feature type="helix" evidence="15">
    <location>
        <begin position="366"/>
        <end position="399"/>
    </location>
</feature>
<feature type="turn" evidence="17">
    <location>
        <begin position="400"/>
        <end position="404"/>
    </location>
</feature>
<feature type="strand" evidence="15">
    <location>
        <begin position="407"/>
        <end position="409"/>
    </location>
</feature>
<feature type="helix" evidence="15">
    <location>
        <begin position="413"/>
        <end position="416"/>
    </location>
</feature>
<feature type="helix" evidence="15">
    <location>
        <begin position="419"/>
        <end position="432"/>
    </location>
</feature>
<feature type="strand" evidence="15">
    <location>
        <begin position="442"/>
        <end position="447"/>
    </location>
</feature>
<feature type="helix" evidence="15">
    <location>
        <begin position="450"/>
        <end position="452"/>
    </location>
</feature>
<feature type="helix" evidence="15">
    <location>
        <begin position="454"/>
        <end position="462"/>
    </location>
</feature>
<feature type="strand" evidence="15">
    <location>
        <begin position="471"/>
        <end position="476"/>
    </location>
</feature>
<feature type="strand" evidence="15">
    <location>
        <begin position="486"/>
        <end position="488"/>
    </location>
</feature>
<feature type="helix" evidence="15">
    <location>
        <begin position="492"/>
        <end position="498"/>
    </location>
</feature>
<feature type="strand" evidence="15">
    <location>
        <begin position="500"/>
        <end position="503"/>
    </location>
</feature>
<feature type="strand" evidence="15">
    <location>
        <begin position="507"/>
        <end position="511"/>
    </location>
</feature>
<feature type="helix" evidence="15">
    <location>
        <begin position="513"/>
        <end position="520"/>
    </location>
</feature>
<feature type="strand" evidence="15">
    <location>
        <begin position="525"/>
        <end position="528"/>
    </location>
</feature>
<feature type="helix" evidence="15">
    <location>
        <begin position="532"/>
        <end position="538"/>
    </location>
</feature>
<feature type="helix" evidence="15">
    <location>
        <begin position="543"/>
        <end position="548"/>
    </location>
</feature>
<feature type="strand" evidence="15">
    <location>
        <begin position="551"/>
        <end position="554"/>
    </location>
</feature>
<feature type="strand" evidence="15">
    <location>
        <begin position="557"/>
        <end position="559"/>
    </location>
</feature>
<feature type="helix" evidence="15">
    <location>
        <begin position="561"/>
        <end position="576"/>
    </location>
</feature>
<feature type="helix" evidence="15">
    <location>
        <begin position="580"/>
        <end position="592"/>
    </location>
</feature>
<feature type="helix" evidence="15">
    <location>
        <begin position="593"/>
        <end position="597"/>
    </location>
</feature>
<feature type="helix" evidence="15">
    <location>
        <begin position="599"/>
        <end position="617"/>
    </location>
</feature>
<feature type="helix" evidence="15">
    <location>
        <begin position="619"/>
        <end position="624"/>
    </location>
</feature>
<feature type="strand" evidence="19">
    <location>
        <begin position="626"/>
        <end position="628"/>
    </location>
</feature>
<feature type="helix" evidence="15">
    <location>
        <begin position="635"/>
        <end position="638"/>
    </location>
</feature>
<gene>
    <name type="primary">GSY2</name>
    <name type="ordered locus">YLR258W</name>
    <name type="ORF">L8479.8</name>
</gene>
<reference key="1">
    <citation type="journal article" date="1991" name="J. Biol. Chem.">
        <title>Two glycogen synthase isoforms in Saccharomyces cerevisiae are coded by distinct genes that are differentially controlled.</title>
        <authorList>
            <person name="Farkast I."/>
            <person name="Hardy T.A."/>
            <person name="Roach P.J."/>
            <person name="Goebl M.G."/>
        </authorList>
    </citation>
    <scope>NUCLEOTIDE SEQUENCE [GENOMIC DNA]</scope>
    <scope>PROTEIN SEQUENCE OF 52-62; 378-391; 593-600; 602-608 AND 661-670</scope>
    <scope>PROBABLE CLEAVAGE OF INITIATOR METHIONINE</scope>
    <source>
        <strain>YPH52</strain>
    </source>
</reference>
<reference key="2">
    <citation type="journal article" date="1997" name="Nature">
        <title>The nucleotide sequence of Saccharomyces cerevisiae chromosome XII.</title>
        <authorList>
            <person name="Johnston M."/>
            <person name="Hillier L.W."/>
            <person name="Riles L."/>
            <person name="Albermann K."/>
            <person name="Andre B."/>
            <person name="Ansorge W."/>
            <person name="Benes V."/>
            <person name="Brueckner M."/>
            <person name="Delius H."/>
            <person name="Dubois E."/>
            <person name="Duesterhoeft A."/>
            <person name="Entian K.-D."/>
            <person name="Floeth M."/>
            <person name="Goffeau A."/>
            <person name="Hebling U."/>
            <person name="Heumann K."/>
            <person name="Heuss-Neitzel D."/>
            <person name="Hilbert H."/>
            <person name="Hilger F."/>
            <person name="Kleine K."/>
            <person name="Koetter P."/>
            <person name="Louis E.J."/>
            <person name="Messenguy F."/>
            <person name="Mewes H.-W."/>
            <person name="Miosga T."/>
            <person name="Moestl D."/>
            <person name="Mueller-Auer S."/>
            <person name="Nentwich U."/>
            <person name="Obermaier B."/>
            <person name="Piravandi E."/>
            <person name="Pohl T.M."/>
            <person name="Portetelle D."/>
            <person name="Purnelle B."/>
            <person name="Rechmann S."/>
            <person name="Rieger M."/>
            <person name="Rinke M."/>
            <person name="Rose M."/>
            <person name="Scharfe M."/>
            <person name="Scherens B."/>
            <person name="Scholler P."/>
            <person name="Schwager C."/>
            <person name="Schwarz S."/>
            <person name="Underwood A.P."/>
            <person name="Urrestarazu L.A."/>
            <person name="Vandenbol M."/>
            <person name="Verhasselt P."/>
            <person name="Vierendeels F."/>
            <person name="Voet M."/>
            <person name="Volckaert G."/>
            <person name="Voss H."/>
            <person name="Wambutt R."/>
            <person name="Wedler E."/>
            <person name="Wedler H."/>
            <person name="Zimmermann F.K."/>
            <person name="Zollner A."/>
            <person name="Hani J."/>
            <person name="Hoheisel J.D."/>
        </authorList>
    </citation>
    <scope>NUCLEOTIDE SEQUENCE [LARGE SCALE GENOMIC DNA]</scope>
    <source>
        <strain>ATCC 204508 / S288c</strain>
    </source>
</reference>
<reference key="3">
    <citation type="journal article" date="2014" name="G3 (Bethesda)">
        <title>The reference genome sequence of Saccharomyces cerevisiae: Then and now.</title>
        <authorList>
            <person name="Engel S.R."/>
            <person name="Dietrich F.S."/>
            <person name="Fisk D.G."/>
            <person name="Binkley G."/>
            <person name="Balakrishnan R."/>
            <person name="Costanzo M.C."/>
            <person name="Dwight S.S."/>
            <person name="Hitz B.C."/>
            <person name="Karra K."/>
            <person name="Nash R.S."/>
            <person name="Weng S."/>
            <person name="Wong E.D."/>
            <person name="Lloyd P."/>
            <person name="Skrzypek M.S."/>
            <person name="Miyasato S.R."/>
            <person name="Simison M."/>
            <person name="Cherry J.M."/>
        </authorList>
    </citation>
    <scope>GENOME REANNOTATION</scope>
    <source>
        <strain>ATCC 204508 / S288c</strain>
    </source>
</reference>
<reference key="4">
    <citation type="journal article" date="1990" name="Biochem. J.">
        <title>Purification, characterization and partial amino acid sequence of glycogen synthase from Saccharomyces cerevisiae.</title>
        <authorList>
            <person name="Carabaza A."/>
            <person name="Arino J."/>
            <person name="Fox J.W."/>
            <person name="Villar-Palasi C."/>
            <person name="Guinovart J.J."/>
        </authorList>
    </citation>
    <scope>PROTEIN SEQUENCE OF 96-99; 236-253; 549-556; 593-600 AND 617-623</scope>
</reference>
<reference key="5">
    <citation type="journal article" date="1998" name="Mol. Cell. Biol.">
        <title>Cyclin partners determine Pho85 protein kinase substrate specificity in vitro and in vivo: control of glycogen biosynthesis by Pcl8 and Pcl10.</title>
        <authorList>
            <person name="Huang D."/>
            <person name="Moffat J."/>
            <person name="Wilson W.A."/>
            <person name="Moore L."/>
            <person name="Cheng C."/>
            <person name="Roach P.J."/>
            <person name="Andrews B.J."/>
        </authorList>
    </citation>
    <scope>PHOSPHORYLATION AT SER-655 AND THR-668</scope>
</reference>
<reference key="6">
    <citation type="journal article" date="1999" name="Mol. Cell. Biol.">
        <title>Substrate targeting of the yeast cyclin-dependent kinase Pho85p by the cyclin Pcl10p.</title>
        <authorList>
            <person name="Wilson W.A."/>
            <person name="Mahrenholz A.M."/>
            <person name="Roach P.J."/>
        </authorList>
    </citation>
    <scope>INTERACTION WITH PCL10</scope>
</reference>
<reference key="7">
    <citation type="journal article" date="2003" name="Nature">
        <title>Global analysis of protein expression in yeast.</title>
        <authorList>
            <person name="Ghaemmaghami S."/>
            <person name="Huh W.-K."/>
            <person name="Bower K."/>
            <person name="Howson R.W."/>
            <person name="Belle A."/>
            <person name="Dephoure N."/>
            <person name="O'Shea E.K."/>
            <person name="Weissman J.S."/>
        </authorList>
    </citation>
    <scope>LEVEL OF PROTEIN EXPRESSION [LARGE SCALE ANALYSIS]</scope>
</reference>
<reference key="8">
    <citation type="journal article" date="2005" name="Arch. Biochem. Biophys.">
        <title>GNN is a self-glucosylating protein involved in the initiation step of glycogen biosynthesis in Neurospora crassa.</title>
        <authorList>
            <person name="de Paula R.M."/>
            <person name="Wilson W.A."/>
            <person name="Terenzi H.F."/>
            <person name="Roach P.J."/>
            <person name="Bertolini M.C."/>
        </authorList>
    </citation>
    <scope>FUNCTION</scope>
    <scope>CATALYTIC ACTIVITY</scope>
</reference>
<reference key="9">
    <citation type="journal article" date="2005" name="Mol. Cell. Proteomics">
        <title>Quantitative phosphoproteomics applied to the yeast pheromone signaling pathway.</title>
        <authorList>
            <person name="Gruhler A."/>
            <person name="Olsen J.V."/>
            <person name="Mohammed S."/>
            <person name="Mortensen P."/>
            <person name="Faergeman N.J."/>
            <person name="Mann M."/>
            <person name="Jensen O.N."/>
        </authorList>
    </citation>
    <scope>PHOSPHORYLATION [LARGE SCALE ANALYSIS] AT SER-651 AND SER-655</scope>
    <scope>IDENTIFICATION BY MASS SPECTROMETRY [LARGE SCALE ANALYSIS]</scope>
    <source>
        <strain>YAL6B</strain>
    </source>
</reference>
<reference key="10">
    <citation type="journal article" date="2007" name="J. Proteome Res.">
        <title>Large-scale phosphorylation analysis of alpha-factor-arrested Saccharomyces cerevisiae.</title>
        <authorList>
            <person name="Li X."/>
            <person name="Gerber S.A."/>
            <person name="Rudner A.D."/>
            <person name="Beausoleil S.A."/>
            <person name="Haas W."/>
            <person name="Villen J."/>
            <person name="Elias J.E."/>
            <person name="Gygi S.P."/>
        </authorList>
    </citation>
    <scope>PHOSPHORYLATION [LARGE SCALE ANALYSIS] AT SER-651</scope>
    <scope>IDENTIFICATION BY MASS SPECTROMETRY [LARGE SCALE ANALYSIS]</scope>
    <source>
        <strain>ADR376</strain>
    </source>
</reference>
<reference key="11">
    <citation type="journal article" date="2008" name="Mol. Cell. Proteomics">
        <title>A multidimensional chromatography technology for in-depth phosphoproteome analysis.</title>
        <authorList>
            <person name="Albuquerque C.P."/>
            <person name="Smolka M.B."/>
            <person name="Payne S.H."/>
            <person name="Bafna V."/>
            <person name="Eng J."/>
            <person name="Zhou H."/>
        </authorList>
    </citation>
    <scope>PHOSPHORYLATION [LARGE SCALE ANALYSIS] AT SER-467; SER-651 AND SER-655</scope>
    <scope>IDENTIFICATION BY MASS SPECTROMETRY [LARGE SCALE ANALYSIS]</scope>
</reference>
<reference key="12">
    <citation type="journal article" date="2009" name="Science">
        <title>Global analysis of Cdk1 substrate phosphorylation sites provides insights into evolution.</title>
        <authorList>
            <person name="Holt L.J."/>
            <person name="Tuch B.B."/>
            <person name="Villen J."/>
            <person name="Johnson A.D."/>
            <person name="Gygi S.P."/>
            <person name="Morgan D.O."/>
        </authorList>
    </citation>
    <scope>PHOSPHORYLATION [LARGE SCALE ANALYSIS] AT SER-651</scope>
    <scope>IDENTIFICATION BY MASS SPECTROMETRY [LARGE SCALE ANALYSIS]</scope>
</reference>
<reference key="13">
    <citation type="journal article" date="2024" name="IScience">
        <title>Atg45 is an autophagy receptor for glycogen, a non-preferred cargo of bulk autophagy in yeast.</title>
        <authorList>
            <person name="Isoda T."/>
            <person name="Takeda E."/>
            <person name="Hosokawa S."/>
            <person name="Hotta-Ren S."/>
            <person name="Ohsumi Y."/>
        </authorList>
    </citation>
    <scope>SUBCELLULAR LOCATION</scope>
</reference>
<dbReference type="EC" id="2.4.1.11" evidence="7"/>
<dbReference type="EMBL" id="M65206">
    <property type="protein sequence ID" value="AAA88716.1"/>
    <property type="molecule type" value="Genomic_DNA"/>
</dbReference>
<dbReference type="EMBL" id="U17244">
    <property type="protein sequence ID" value="AAB67378.1"/>
    <property type="molecule type" value="Genomic_DNA"/>
</dbReference>
<dbReference type="EMBL" id="BK006945">
    <property type="protein sequence ID" value="DAA09571.1"/>
    <property type="molecule type" value="Genomic_DNA"/>
</dbReference>
<dbReference type="PIR" id="S51396">
    <property type="entry name" value="S51396"/>
</dbReference>
<dbReference type="RefSeq" id="NP_013359.1">
    <property type="nucleotide sequence ID" value="NM_001182145.1"/>
</dbReference>
<dbReference type="PDB" id="3NAZ">
    <property type="method" value="X-ray"/>
    <property type="resolution" value="3.00 A"/>
    <property type="chains" value="A/B/C/D=1-705"/>
</dbReference>
<dbReference type="PDB" id="3NB0">
    <property type="method" value="X-ray"/>
    <property type="resolution" value="2.41 A"/>
    <property type="chains" value="A/B/C/D=1-705"/>
</dbReference>
<dbReference type="PDB" id="3NCH">
    <property type="method" value="X-ray"/>
    <property type="resolution" value="2.88 A"/>
    <property type="chains" value="A/B/C/D=1-705"/>
</dbReference>
<dbReference type="PDB" id="3O3C">
    <property type="method" value="X-ray"/>
    <property type="resolution" value="3.51 A"/>
    <property type="chains" value="A/B/C/D=1-705"/>
</dbReference>
<dbReference type="PDB" id="3RSZ">
    <property type="method" value="X-ray"/>
    <property type="resolution" value="3.01 A"/>
    <property type="chains" value="A/B/C/D=1-705"/>
</dbReference>
<dbReference type="PDB" id="3RT1">
    <property type="method" value="X-ray"/>
    <property type="resolution" value="2.80 A"/>
    <property type="chains" value="A/B/C/D=1-705"/>
</dbReference>
<dbReference type="PDB" id="4KQ2">
    <property type="method" value="X-ray"/>
    <property type="resolution" value="2.95 A"/>
    <property type="chains" value="A/B/C/D=1-705"/>
</dbReference>
<dbReference type="PDB" id="4KQM">
    <property type="method" value="X-ray"/>
    <property type="resolution" value="2.77 A"/>
    <property type="chains" value="A/B/C/D=1-705"/>
</dbReference>
<dbReference type="PDB" id="5SUK">
    <property type="method" value="X-ray"/>
    <property type="resolution" value="2.88 A"/>
    <property type="chains" value="A/B/C/D=1-705"/>
</dbReference>
<dbReference type="PDB" id="5SUL">
    <property type="method" value="X-ray"/>
    <property type="resolution" value="3.30 A"/>
    <property type="chains" value="A/B=1-705"/>
</dbReference>
<dbReference type="PDB" id="5UW0">
    <property type="method" value="X-ray"/>
    <property type="resolution" value="2.73 A"/>
    <property type="chains" value="A/B/C/D=1-700"/>
</dbReference>
<dbReference type="PDB" id="5UW1">
    <property type="method" value="X-ray"/>
    <property type="resolution" value="3.26 A"/>
    <property type="chains" value="A/B/C/D=1-700"/>
</dbReference>
<dbReference type="PDB" id="5UW4">
    <property type="method" value="X-ray"/>
    <property type="resolution" value="2.98 A"/>
    <property type="chains" value="A/B/C/D=1-700"/>
</dbReference>
<dbReference type="PDB" id="5UX7">
    <property type="method" value="X-ray"/>
    <property type="resolution" value="2.69 A"/>
    <property type="chains" value="A/B/C/D=1-700"/>
</dbReference>
<dbReference type="PDB" id="5VNC">
    <property type="method" value="X-ray"/>
    <property type="resolution" value="2.98 A"/>
    <property type="chains" value="A/B/C/D=1-700"/>
</dbReference>
<dbReference type="PDB" id="6U77">
    <property type="method" value="X-ray"/>
    <property type="resolution" value="2.85 A"/>
    <property type="chains" value="A/B/C/D=1-705"/>
</dbReference>
<dbReference type="PDBsum" id="3NAZ"/>
<dbReference type="PDBsum" id="3NB0"/>
<dbReference type="PDBsum" id="3NCH"/>
<dbReference type="PDBsum" id="3O3C"/>
<dbReference type="PDBsum" id="3RSZ"/>
<dbReference type="PDBsum" id="3RT1"/>
<dbReference type="PDBsum" id="4KQ2"/>
<dbReference type="PDBsum" id="4KQM"/>
<dbReference type="PDBsum" id="5SUK"/>
<dbReference type="PDBsum" id="5SUL"/>
<dbReference type="PDBsum" id="5UW0"/>
<dbReference type="PDBsum" id="5UW1"/>
<dbReference type="PDBsum" id="5UW4"/>
<dbReference type="PDBsum" id="5UX7"/>
<dbReference type="PDBsum" id="5VNC"/>
<dbReference type="PDBsum" id="6U77"/>
<dbReference type="SMR" id="P27472"/>
<dbReference type="BioGRID" id="31526">
    <property type="interactions" value="117"/>
</dbReference>
<dbReference type="DIP" id="DIP-1255N"/>
<dbReference type="FunCoup" id="P27472">
    <property type="interactions" value="588"/>
</dbReference>
<dbReference type="IntAct" id="P27472">
    <property type="interactions" value="32"/>
</dbReference>
<dbReference type="MINT" id="P27472"/>
<dbReference type="STRING" id="4932.YLR258W"/>
<dbReference type="CAZy" id="GT3">
    <property type="family name" value="Glycosyltransferase Family 3"/>
</dbReference>
<dbReference type="iPTMnet" id="P27472"/>
<dbReference type="PaxDb" id="4932-YLR258W"/>
<dbReference type="PeptideAtlas" id="P27472"/>
<dbReference type="TopDownProteomics" id="P27472"/>
<dbReference type="EnsemblFungi" id="YLR258W_mRNA">
    <property type="protein sequence ID" value="YLR258W"/>
    <property type="gene ID" value="YLR258W"/>
</dbReference>
<dbReference type="GeneID" id="850962"/>
<dbReference type="KEGG" id="sce:YLR258W"/>
<dbReference type="AGR" id="SGD:S000004248"/>
<dbReference type="SGD" id="S000004248">
    <property type="gene designation" value="GSY2"/>
</dbReference>
<dbReference type="VEuPathDB" id="FungiDB:YLR258W"/>
<dbReference type="eggNOG" id="KOG3742">
    <property type="taxonomic scope" value="Eukaryota"/>
</dbReference>
<dbReference type="GeneTree" id="ENSGT00390000018612"/>
<dbReference type="HOGENOM" id="CLU_015910_1_0_1"/>
<dbReference type="InParanoid" id="P27472"/>
<dbReference type="OMA" id="RMHKSNV"/>
<dbReference type="OrthoDB" id="6335297at2759"/>
<dbReference type="BioCyc" id="YEAST:YLR258W-MONOMER"/>
<dbReference type="Reactome" id="R-SCE-3322077">
    <property type="pathway name" value="Glycogen synthesis"/>
</dbReference>
<dbReference type="SABIO-RK" id="P27472"/>
<dbReference type="UniPathway" id="UPA00164"/>
<dbReference type="BioGRID-ORCS" id="850962">
    <property type="hits" value="7 hits in 10 CRISPR screens"/>
</dbReference>
<dbReference type="EvolutionaryTrace" id="P27472"/>
<dbReference type="PRO" id="PR:P27472"/>
<dbReference type="Proteomes" id="UP000002311">
    <property type="component" value="Chromosome XII"/>
</dbReference>
<dbReference type="RNAct" id="P27472">
    <property type="molecule type" value="protein"/>
</dbReference>
<dbReference type="GO" id="GO:0005737">
    <property type="term" value="C:cytoplasm"/>
    <property type="evidence" value="ECO:0000314"/>
    <property type="project" value="SGD"/>
</dbReference>
<dbReference type="GO" id="GO:0005829">
    <property type="term" value="C:cytosol"/>
    <property type="evidence" value="ECO:0007669"/>
    <property type="project" value="UniProtKB-SubCell"/>
</dbReference>
<dbReference type="GO" id="GO:0042587">
    <property type="term" value="C:glycogen granule"/>
    <property type="evidence" value="ECO:0000314"/>
    <property type="project" value="UniProtKB"/>
</dbReference>
<dbReference type="GO" id="GO:0005634">
    <property type="term" value="C:nucleus"/>
    <property type="evidence" value="ECO:0007005"/>
    <property type="project" value="SGD"/>
</dbReference>
<dbReference type="GO" id="GO:0004373">
    <property type="term" value="F:alpha-1,4-glucan glucosyltransferase (UDP-glucose donor) activity"/>
    <property type="evidence" value="ECO:0000314"/>
    <property type="project" value="SGD"/>
</dbReference>
<dbReference type="GO" id="GO:2001069">
    <property type="term" value="F:glycogen binding"/>
    <property type="evidence" value="ECO:0000314"/>
    <property type="project" value="SGD"/>
</dbReference>
<dbReference type="GO" id="GO:0042802">
    <property type="term" value="F:identical protein binding"/>
    <property type="evidence" value="ECO:0000353"/>
    <property type="project" value="IntAct"/>
</dbReference>
<dbReference type="GO" id="GO:0005978">
    <property type="term" value="P:glycogen biosynthetic process"/>
    <property type="evidence" value="ECO:0000315"/>
    <property type="project" value="SGD"/>
</dbReference>
<dbReference type="CDD" id="cd03793">
    <property type="entry name" value="GT3_GSY2-like"/>
    <property type="match status" value="1"/>
</dbReference>
<dbReference type="DisProt" id="DP02097"/>
<dbReference type="FunFam" id="3.40.50.2000:FF:000045">
    <property type="entry name" value="Glycogen [starch] synthase"/>
    <property type="match status" value="1"/>
</dbReference>
<dbReference type="FunFam" id="3.40.50.2000:FF:000177">
    <property type="entry name" value="Glycogen [starch] synthase"/>
    <property type="match status" value="1"/>
</dbReference>
<dbReference type="Gene3D" id="6.10.260.10">
    <property type="match status" value="1"/>
</dbReference>
<dbReference type="Gene3D" id="3.40.50.2000">
    <property type="entry name" value="Glycogen Phosphorylase B"/>
    <property type="match status" value="2"/>
</dbReference>
<dbReference type="InterPro" id="IPR008631">
    <property type="entry name" value="Glycogen_synth"/>
</dbReference>
<dbReference type="PANTHER" id="PTHR10176:SF3">
    <property type="entry name" value="GLYCOGEN [STARCH] SYNTHASE"/>
    <property type="match status" value="1"/>
</dbReference>
<dbReference type="PANTHER" id="PTHR10176">
    <property type="entry name" value="GLYCOGEN SYNTHASE"/>
    <property type="match status" value="1"/>
</dbReference>
<dbReference type="Pfam" id="PF05693">
    <property type="entry name" value="Glycogen_syn"/>
    <property type="match status" value="1"/>
</dbReference>
<dbReference type="SUPFAM" id="SSF53756">
    <property type="entry name" value="UDP-Glycosyltransferase/glycogen phosphorylase"/>
    <property type="match status" value="2"/>
</dbReference>
<accession>P27472</accession>
<accession>D6VYQ5</accession>
<comment type="function">
    <text evidence="7">Glycogen synthase participates in the glycogen biosynthetic process along with glycogenin and glycogen branching enzyme. Extends the primer composed of a few glucose units formed by glycogenin by adding new glucose units to it. In this context, glycogen synthase transfers the glycosyl residue from UDP-Glc to the non-reducing end of alpha-1,4-glucan.</text>
</comment>
<comment type="catalytic activity">
    <reaction evidence="7">
        <text>[(1-&gt;4)-alpha-D-glucosyl](n) + UDP-alpha-D-glucose = [(1-&gt;4)-alpha-D-glucosyl](n+1) + UDP + H(+)</text>
        <dbReference type="Rhea" id="RHEA:18549"/>
        <dbReference type="Rhea" id="RHEA-COMP:9584"/>
        <dbReference type="Rhea" id="RHEA-COMP:9587"/>
        <dbReference type="ChEBI" id="CHEBI:15378"/>
        <dbReference type="ChEBI" id="CHEBI:15444"/>
        <dbReference type="ChEBI" id="CHEBI:58223"/>
        <dbReference type="ChEBI" id="CHEBI:58885"/>
        <dbReference type="EC" id="2.4.1.11"/>
    </reaction>
    <physiologicalReaction direction="left-to-right" evidence="7">
        <dbReference type="Rhea" id="RHEA:18550"/>
    </physiologicalReaction>
</comment>
<comment type="activity regulation">
    <text evidence="2">Allosteric activation by glucose-6-phosphate, and phosphorylation by a cAMP-dependent kinase.</text>
</comment>
<comment type="pathway">
    <text evidence="2">Glycan biosynthesis; glycogen biosynthesis.</text>
</comment>
<comment type="subunit">
    <text evidence="5">Interacts with PCL10.</text>
</comment>
<comment type="interaction">
    <interactant intactId="EBI-8036">
        <id>P27472</id>
    </interactant>
    <interactant intactId="EBI-2064417">
        <id>P36143</id>
        <label>GLG1</label>
    </interactant>
    <organismsDiffer>false</organismsDiffer>
    <experiments>3</experiments>
</comment>
<comment type="interaction">
    <interactant intactId="EBI-8036">
        <id>P27472</id>
    </interactant>
    <interactant intactId="EBI-8031">
        <id>P23337</id>
        <label>GSY1</label>
    </interactant>
    <organismsDiffer>false</organismsDiffer>
    <experiments>4</experiments>
</comment>
<comment type="interaction">
    <interactant intactId="EBI-8036">
        <id>P27472</id>
    </interactant>
    <interactant intactId="EBI-8036">
        <id>P27472</id>
        <label>GSY2</label>
    </interactant>
    <organismsDiffer>false</organismsDiffer>
    <experiments>3</experiments>
</comment>
<comment type="subcellular location">
    <subcellularLocation>
        <location evidence="8">Cytoplasm</location>
        <location evidence="8">Cytosol</location>
    </subcellularLocation>
    <text evidence="8">Localizes to glycogen granules in the cytosol.</text>
</comment>
<comment type="PTM">
    <text evidence="9">Phosphorylated by the cyclin-CDK PCL10-PHO85. Phosphorylation causes inactivation of enzyme.</text>
</comment>
<comment type="miscellaneous">
    <text evidence="6">Present with 14600 molecules/cell in log phase SD medium.</text>
</comment>
<comment type="similarity">
    <text evidence="10">Belongs to the glycosyltransferase 3 family.</text>
</comment>